<evidence type="ECO:0000250" key="1">
    <source>
        <dbReference type="UniProtKB" id="Q381M1"/>
    </source>
</evidence>
<evidence type="ECO:0000250" key="2">
    <source>
        <dbReference type="UniProtKB" id="Q86MV5"/>
    </source>
</evidence>
<evidence type="ECO:0000250" key="3">
    <source>
        <dbReference type="UniProtKB" id="Q8WQX6"/>
    </source>
</evidence>
<evidence type="ECO:0000255" key="4"/>
<evidence type="ECO:0000256" key="5">
    <source>
        <dbReference type="SAM" id="MobiDB-lite"/>
    </source>
</evidence>
<evidence type="ECO:0000269" key="6">
    <source>
    </source>
</evidence>
<evidence type="ECO:0000269" key="7">
    <source>
    </source>
</evidence>
<evidence type="ECO:0000269" key="8">
    <source>
    </source>
</evidence>
<evidence type="ECO:0000269" key="9">
    <source>
    </source>
</evidence>
<evidence type="ECO:0000269" key="10">
    <source>
    </source>
</evidence>
<evidence type="ECO:0000269" key="11">
    <source>
    </source>
</evidence>
<evidence type="ECO:0000303" key="12">
    <source>
    </source>
</evidence>
<evidence type="ECO:0000305" key="13"/>
<evidence type="ECO:0000305" key="14">
    <source>
    </source>
</evidence>
<evidence type="ECO:0000305" key="15">
    <source>
    </source>
</evidence>
<evidence type="ECO:0000312" key="16">
    <source>
        <dbReference type="EMBL" id="AAK38334.1"/>
    </source>
</evidence>
<evidence type="ECO:0007744" key="17">
    <source>
        <dbReference type="PDB" id="5HZD"/>
    </source>
</evidence>
<evidence type="ECO:0007744" key="18">
    <source>
        <dbReference type="PDB" id="5I49"/>
    </source>
</evidence>
<evidence type="ECO:0007744" key="19">
    <source>
        <dbReference type="PDB" id="5IDO"/>
    </source>
</evidence>
<evidence type="ECO:0007829" key="20">
    <source>
        <dbReference type="PDB" id="5HZD"/>
    </source>
</evidence>
<evidence type="ECO:0007829" key="21">
    <source>
        <dbReference type="PDB" id="5I49"/>
    </source>
</evidence>
<proteinExistence type="evidence at protein level"/>
<dbReference type="EC" id="2.7.7.52" evidence="6 7 8 10 11 14"/>
<dbReference type="EMBL" id="AY029070">
    <property type="protein sequence ID" value="AAK38334.1"/>
    <property type="molecule type" value="Genomic_DNA"/>
</dbReference>
<dbReference type="PDB" id="5HZD">
    <property type="method" value="X-ray"/>
    <property type="resolution" value="1.60 A"/>
    <property type="chains" value="A=189-699"/>
</dbReference>
<dbReference type="PDB" id="5I49">
    <property type="method" value="X-ray"/>
    <property type="resolution" value="1.80 A"/>
    <property type="chains" value="A=189-699"/>
</dbReference>
<dbReference type="PDB" id="5IDO">
    <property type="method" value="X-ray"/>
    <property type="resolution" value="2.20 A"/>
    <property type="chains" value="A=189-699"/>
</dbReference>
<dbReference type="PDBsum" id="5HZD"/>
<dbReference type="PDBsum" id="5I49"/>
<dbReference type="PDBsum" id="5IDO"/>
<dbReference type="SMR" id="Q8WQX5"/>
<dbReference type="GO" id="GO:0005739">
    <property type="term" value="C:mitochondrion"/>
    <property type="evidence" value="ECO:0000314"/>
    <property type="project" value="UniProtKB"/>
</dbReference>
<dbReference type="GO" id="GO:0032991">
    <property type="term" value="C:protein-containing complex"/>
    <property type="evidence" value="ECO:0000314"/>
    <property type="project" value="UniProtKB"/>
</dbReference>
<dbReference type="GO" id="GO:0000166">
    <property type="term" value="F:nucleotide binding"/>
    <property type="evidence" value="ECO:0007669"/>
    <property type="project" value="UniProtKB-KW"/>
</dbReference>
<dbReference type="GO" id="GO:0003723">
    <property type="term" value="F:RNA binding"/>
    <property type="evidence" value="ECO:0007669"/>
    <property type="project" value="UniProtKB-KW"/>
</dbReference>
<dbReference type="GO" id="GO:0050265">
    <property type="term" value="F:RNA uridylyltransferase activity"/>
    <property type="evidence" value="ECO:0000314"/>
    <property type="project" value="UniProtKB"/>
</dbReference>
<dbReference type="GO" id="GO:0008270">
    <property type="term" value="F:zinc ion binding"/>
    <property type="evidence" value="ECO:0007669"/>
    <property type="project" value="UniProtKB-KW"/>
</dbReference>
<dbReference type="GO" id="GO:0080156">
    <property type="term" value="P:mitochondrial mRNA modification"/>
    <property type="evidence" value="ECO:0000315"/>
    <property type="project" value="UniProtKB"/>
</dbReference>
<dbReference type="GO" id="GO:0006397">
    <property type="term" value="P:mRNA processing"/>
    <property type="evidence" value="ECO:0007669"/>
    <property type="project" value="UniProtKB-KW"/>
</dbReference>
<dbReference type="GO" id="GO:0051260">
    <property type="term" value="P:protein homooligomerization"/>
    <property type="evidence" value="ECO:0000314"/>
    <property type="project" value="UniProtKB"/>
</dbReference>
<dbReference type="GO" id="GO:0031123">
    <property type="term" value="P:RNA 3'-end processing"/>
    <property type="evidence" value="ECO:0000314"/>
    <property type="project" value="UniProtKB"/>
</dbReference>
<dbReference type="GO" id="GO:0000154">
    <property type="term" value="P:rRNA modification"/>
    <property type="evidence" value="ECO:0000315"/>
    <property type="project" value="UniProtKB"/>
</dbReference>
<dbReference type="CDD" id="cd05402">
    <property type="entry name" value="NT_PAP_TUTase"/>
    <property type="match status" value="1"/>
</dbReference>
<dbReference type="FunFam" id="1.10.1410.10:FF:000016">
    <property type="entry name" value="Poly(A) polymerase, putative"/>
    <property type="match status" value="1"/>
</dbReference>
<dbReference type="Gene3D" id="1.10.1410.10">
    <property type="match status" value="1"/>
</dbReference>
<dbReference type="Gene3D" id="3.30.460.50">
    <property type="match status" value="1"/>
</dbReference>
<dbReference type="Gene3D" id="3.30.70.1970">
    <property type="match status" value="1"/>
</dbReference>
<dbReference type="InterPro" id="IPR054708">
    <property type="entry name" value="MTPAP-like_central"/>
</dbReference>
<dbReference type="InterPro" id="IPR043519">
    <property type="entry name" value="NT_sf"/>
</dbReference>
<dbReference type="InterPro" id="IPR002058">
    <property type="entry name" value="PAP_assoc"/>
</dbReference>
<dbReference type="PANTHER" id="PTHR12271">
    <property type="entry name" value="POLY A POLYMERASE CID PAP -RELATED"/>
    <property type="match status" value="1"/>
</dbReference>
<dbReference type="PANTHER" id="PTHR12271:SF98">
    <property type="entry name" value="RNA EDITING 3' TERMINAL URIDYLYL TRANSFERASE 1"/>
    <property type="match status" value="1"/>
</dbReference>
<dbReference type="Pfam" id="PF22600">
    <property type="entry name" value="MTPAP-like_central"/>
    <property type="match status" value="1"/>
</dbReference>
<dbReference type="Pfam" id="PF03828">
    <property type="entry name" value="PAP_assoc"/>
    <property type="match status" value="1"/>
</dbReference>
<dbReference type="SUPFAM" id="SSF81301">
    <property type="entry name" value="Nucleotidyltransferase"/>
    <property type="match status" value="1"/>
</dbReference>
<dbReference type="SUPFAM" id="SSF81631">
    <property type="entry name" value="PAP/OAS1 substrate-binding domain"/>
    <property type="match status" value="1"/>
</dbReference>
<dbReference type="PROSITE" id="PS50157">
    <property type="entry name" value="ZINC_FINGER_C2H2_2"/>
    <property type="match status" value="1"/>
</dbReference>
<feature type="transit peptide" description="Mitochondrion" evidence="13">
    <location>
        <begin position="1"/>
        <end status="unknown"/>
    </location>
</feature>
<feature type="chain" id="PRO_0000450678" description="Terminal uridylyltransferase 1">
    <location>
        <begin status="unknown"/>
        <end position="976"/>
    </location>
</feature>
<feature type="domain" description="PAP-associated" evidence="4">
    <location>
        <begin position="366"/>
        <end position="425"/>
    </location>
</feature>
<feature type="zinc finger region" description="C2H2-type; atypical" evidence="11">
    <location>
        <begin position="190"/>
        <end position="221"/>
    </location>
</feature>
<feature type="region of interest" description="Required for oligomerization and may contribute to the incorporation into the MPsome complex" evidence="11">
    <location>
        <begin position="1"/>
        <end position="188"/>
    </location>
</feature>
<feature type="region of interest" description="Disordered" evidence="5">
    <location>
        <begin position="1"/>
        <end position="47"/>
    </location>
</feature>
<feature type="region of interest" description="Disordered" evidence="5">
    <location>
        <begin position="129"/>
        <end position="185"/>
    </location>
</feature>
<feature type="region of interest" description="Important for catalytic activity and RNA binding" evidence="11">
    <location>
        <begin position="700"/>
        <end position="976"/>
    </location>
</feature>
<feature type="region of interest" description="Disordered" evidence="5">
    <location>
        <begin position="732"/>
        <end position="755"/>
    </location>
</feature>
<feature type="short sequence motif" description="Nucleotide recognition motif (NRM)" evidence="15">
    <location>
        <begin position="652"/>
        <end position="661"/>
    </location>
</feature>
<feature type="compositionally biased region" description="Acidic residues" evidence="5">
    <location>
        <begin position="147"/>
        <end position="183"/>
    </location>
</feature>
<feature type="binding site" evidence="11 17 18">
    <location>
        <position position="195"/>
    </location>
    <ligand>
        <name>Zn(2+)</name>
        <dbReference type="ChEBI" id="CHEBI:29105"/>
    </ligand>
</feature>
<feature type="binding site" evidence="11 17 18">
    <location>
        <position position="198"/>
    </location>
    <ligand>
        <name>Zn(2+)</name>
        <dbReference type="ChEBI" id="CHEBI:29105"/>
    </ligand>
</feature>
<feature type="binding site" evidence="11 17 18">
    <location>
        <position position="212"/>
    </location>
    <ligand>
        <name>Zn(2+)</name>
        <dbReference type="ChEBI" id="CHEBI:29105"/>
    </ligand>
</feature>
<feature type="binding site" evidence="11 17 18">
    <location>
        <position position="217"/>
    </location>
    <ligand>
        <name>Zn(2+)</name>
        <dbReference type="ChEBI" id="CHEBI:29105"/>
    </ligand>
</feature>
<feature type="binding site" evidence="1">
    <location>
        <position position="298"/>
    </location>
    <ligand>
        <name>UTP</name>
        <dbReference type="ChEBI" id="CHEBI:46398"/>
    </ligand>
</feature>
<feature type="binding site" evidence="1">
    <location>
        <begin position="309"/>
        <end position="312"/>
    </location>
    <ligand>
        <name>UTP</name>
        <dbReference type="ChEBI" id="CHEBI:46398"/>
    </ligand>
</feature>
<feature type="binding site" evidence="2">
    <location>
        <position position="310"/>
    </location>
    <ligand>
        <name>Mg(2+)</name>
        <dbReference type="ChEBI" id="CHEBI:18420"/>
        <note>catalytic</note>
    </ligand>
</feature>
<feature type="binding site" evidence="2">
    <location>
        <position position="312"/>
    </location>
    <ligand>
        <name>Mg(2+)</name>
        <dbReference type="ChEBI" id="CHEBI:18420"/>
        <note>catalytic</note>
    </ligand>
</feature>
<feature type="binding site" evidence="1">
    <location>
        <position position="358"/>
    </location>
    <ligand>
        <name>RNA</name>
        <dbReference type="ChEBI" id="CHEBI:33697"/>
    </ligand>
</feature>
<feature type="binding site" evidence="11 18 19">
    <location>
        <begin position="480"/>
        <end position="484"/>
    </location>
    <ligand>
        <name>UTP</name>
        <dbReference type="ChEBI" id="CHEBI:46398"/>
    </ligand>
</feature>
<feature type="binding site" evidence="11 18 19">
    <location>
        <position position="505"/>
    </location>
    <ligand>
        <name>UTP</name>
        <dbReference type="ChEBI" id="CHEBI:46398"/>
    </ligand>
</feature>
<feature type="binding site" evidence="11 18 19">
    <location>
        <position position="509"/>
    </location>
    <ligand>
        <name>UTP</name>
        <dbReference type="ChEBI" id="CHEBI:46398"/>
    </ligand>
</feature>
<feature type="binding site" evidence="11 18 19">
    <location>
        <begin position="523"/>
        <end position="524"/>
    </location>
    <ligand>
        <name>UTP</name>
        <dbReference type="ChEBI" id="CHEBI:46398"/>
    </ligand>
</feature>
<feature type="site" description="Important for catalytic activity" evidence="2">
    <location>
        <position position="473"/>
    </location>
</feature>
<feature type="strand" evidence="20">
    <location>
        <begin position="196"/>
        <end position="200"/>
    </location>
</feature>
<feature type="strand" evidence="20">
    <location>
        <begin position="202"/>
        <end position="205"/>
    </location>
</feature>
<feature type="helix" evidence="20">
    <location>
        <begin position="206"/>
        <end position="217"/>
    </location>
</feature>
<feature type="helix" evidence="20">
    <location>
        <begin position="218"/>
        <end position="220"/>
    </location>
</feature>
<feature type="helix" evidence="20">
    <location>
        <begin position="224"/>
        <end position="234"/>
    </location>
</feature>
<feature type="helix" evidence="20">
    <location>
        <begin position="235"/>
        <end position="237"/>
    </location>
</feature>
<feature type="helix" evidence="20">
    <location>
        <begin position="238"/>
        <end position="244"/>
    </location>
</feature>
<feature type="helix" evidence="20">
    <location>
        <begin position="246"/>
        <end position="263"/>
    </location>
</feature>
<feature type="helix" evidence="20">
    <location>
        <begin position="267"/>
        <end position="287"/>
    </location>
</feature>
<feature type="strand" evidence="20">
    <location>
        <begin position="292"/>
        <end position="297"/>
    </location>
</feature>
<feature type="helix" evidence="20">
    <location>
        <begin position="298"/>
        <end position="301"/>
    </location>
</feature>
<feature type="strand" evidence="21">
    <location>
        <begin position="307"/>
        <end position="309"/>
    </location>
</feature>
<feature type="strand" evidence="20">
    <location>
        <begin position="311"/>
        <end position="316"/>
    </location>
</feature>
<feature type="helix" evidence="20">
    <location>
        <begin position="318"/>
        <end position="322"/>
    </location>
</feature>
<feature type="helix" evidence="20">
    <location>
        <begin position="330"/>
        <end position="343"/>
    </location>
</feature>
<feature type="turn" evidence="20">
    <location>
        <begin position="348"/>
        <end position="350"/>
    </location>
</feature>
<feature type="strand" evidence="20">
    <location>
        <begin position="351"/>
        <end position="354"/>
    </location>
</feature>
<feature type="strand" evidence="20">
    <location>
        <begin position="357"/>
        <end position="359"/>
    </location>
</feature>
<feature type="strand" evidence="20">
    <location>
        <begin position="361"/>
        <end position="364"/>
    </location>
</feature>
<feature type="helix" evidence="20">
    <location>
        <begin position="382"/>
        <end position="384"/>
    </location>
</feature>
<feature type="strand" evidence="20">
    <location>
        <begin position="385"/>
        <end position="392"/>
    </location>
</feature>
<feature type="helix" evidence="20">
    <location>
        <begin position="396"/>
        <end position="410"/>
    </location>
</feature>
<feature type="strand" evidence="20">
    <location>
        <begin position="414"/>
        <end position="420"/>
    </location>
</feature>
<feature type="strand" evidence="20">
    <location>
        <begin position="424"/>
        <end position="433"/>
    </location>
</feature>
<feature type="helix" evidence="20">
    <location>
        <begin position="434"/>
        <end position="441"/>
    </location>
</feature>
<feature type="strand" evidence="20">
    <location>
        <begin position="454"/>
        <end position="463"/>
    </location>
</feature>
<feature type="helix" evidence="20">
    <location>
        <begin position="466"/>
        <end position="469"/>
    </location>
</feature>
<feature type="strand" evidence="20">
    <location>
        <begin position="472"/>
        <end position="475"/>
    </location>
</feature>
<feature type="helix" evidence="20">
    <location>
        <begin position="479"/>
        <end position="491"/>
    </location>
</feature>
<feature type="helix" evidence="20">
    <location>
        <begin position="497"/>
        <end position="510"/>
    </location>
</feature>
<feature type="helix" evidence="20">
    <location>
        <begin position="516"/>
        <end position="518"/>
    </location>
</feature>
<feature type="helix" evidence="20">
    <location>
        <begin position="523"/>
        <end position="536"/>
    </location>
</feature>
<feature type="helix" evidence="20">
    <location>
        <begin position="545"/>
        <end position="547"/>
    </location>
</feature>
<feature type="helix" evidence="20">
    <location>
        <begin position="572"/>
        <end position="595"/>
    </location>
</feature>
<feature type="turn" evidence="20">
    <location>
        <begin position="599"/>
        <end position="601"/>
    </location>
</feature>
<feature type="strand" evidence="20">
    <location>
        <begin position="602"/>
        <end position="604"/>
    </location>
</feature>
<feature type="strand" evidence="20">
    <location>
        <begin position="606"/>
        <end position="610"/>
    </location>
</feature>
<feature type="helix" evidence="20">
    <location>
        <begin position="615"/>
        <end position="617"/>
    </location>
</feature>
<feature type="strand" evidence="20">
    <location>
        <begin position="655"/>
        <end position="657"/>
    </location>
</feature>
<feature type="turn" evidence="20">
    <location>
        <begin position="662"/>
        <end position="665"/>
    </location>
</feature>
<feature type="helix" evidence="20">
    <location>
        <begin position="668"/>
        <end position="684"/>
    </location>
</feature>
<gene>
    <name evidence="13" type="primary">KRET1</name>
</gene>
<name>TUT1_TRYBB</name>
<keyword id="KW-0002">3D-structure</keyword>
<keyword id="KW-0460">Magnesium</keyword>
<keyword id="KW-0464">Manganese</keyword>
<keyword id="KW-0479">Metal-binding</keyword>
<keyword id="KW-0496">Mitochondrion</keyword>
<keyword id="KW-0507">mRNA processing</keyword>
<keyword id="KW-0547">Nucleotide-binding</keyword>
<keyword id="KW-0548">Nucleotidyltransferase</keyword>
<keyword id="KW-0694">RNA-binding</keyword>
<keyword id="KW-0808">Transferase</keyword>
<keyword id="KW-0809">Transit peptide</keyword>
<keyword id="KW-0862">Zinc</keyword>
<keyword id="KW-0863">Zinc-finger</keyword>
<accession>Q8WQX5</accession>
<sequence length="976" mass="107524">MVSKYHRLLQQGLREEEEGVTERNMVAGGEQRHGHVDDDNAEGDADFYDQKDERRAKMWNPKHESANVSAGGKQNRSVRDCLPGSLPPVANTSTDAAVRFDRERKNAGHGVDISCVEGDGAQMGTYVSTGRSDAKAGGGSSAIGVTADDESDGNLDTDGSDASEGDEVESTTDADVYGEDDTTEGPRGGVRLYSCDACPHAVFTTHAALLAHAEEHHADLLPDHARLRRIAQKLNPVWNRALNARRNTITSWGKKIFHVAAQRDAGESKMQEAHRARAQLECVVRRWHDKARVFIFGSSVAMGVWDGTADIDFAVVDVDAMERGSWPPLEKNAVRSITELLRRVGFSFVNLEPISHARVPIIKHHASSPILTVARRDAEDVVARSIRFILNGPATREDRLLLEGSVRDAVGPTGVQQVWWNRTSDMMSATLESTTAAVRAAMCSPALASASLRTKVQPAHDECRPELYNIDFDLSFRAFGIRNSTLLRKYLLSHPCARPGAIVLKDWSKTSGVNNSVNGYFTSYAINIMWIYYLVQKGYVPYVDPLEIPESLVNYTDFDPRYTPMIDPEITNTEREELYKAAGDMLVGFFYFYSFEFDWGHNVISLNRPGITTKRMLGWHVEDVVPVASTSVSSGGGGSNVKRHPTRYELCIEDPYEENLNLGRHIGVTKSLRVRTELYRGLLSLLKEGETRSCVFAAADSSGTPAAGGKQSAALPARALFKLMALTTQAISESRRLPQSNSDNSGRIANGDNESLTEVGGGHRVEGAGVDPASCAGASLSSFGEPPIGVHEKTLESIFVEKAPMEFQLVRKVWNWHQLIHRLGYKIHRGHVMPRREVGVRCTARRDAEETTTELASGVDTTKSLRPGRGLTDTMLRDLSRGYMTLTPEWVAWSAPWVSQHLRGYSRLTTVRSAVADETPPALATVPSVVKPPTGEAVMGAMRTTRRNAAPARRVELLKLWLWRGISKVTPFKSPR</sequence>
<organism>
    <name type="scientific">Trypanosoma brucei brucei</name>
    <dbReference type="NCBI Taxonomy" id="5702"/>
    <lineage>
        <taxon>Eukaryota</taxon>
        <taxon>Discoba</taxon>
        <taxon>Euglenozoa</taxon>
        <taxon>Kinetoplastea</taxon>
        <taxon>Metakinetoplastina</taxon>
        <taxon>Trypanosomatida</taxon>
        <taxon>Trypanosomatidae</taxon>
        <taxon>Trypanosoma</taxon>
    </lineage>
</organism>
<comment type="function">
    <text evidence="6 9 10 11">Terminal uridylyltransferase which is involved in the post-transcriptional editing of mitochondrial RNA, a process involving the addition and deletion of uridine (U) nucleotides in the pre-RNA (PubMed:11893335, PubMed:20086102, PubMed:26833087, PubMed:27744351). Specifically, catalyzes the addition of Us to the 3'-hydroxyl group of guided RNA (gRNA), ribosomal RNA (rRNA) and some mRNAs (PubMed:11893335, PubMed:20086102, PubMed:26833087, PubMed:27744351). As part of the mitochondrial 3' processome (MPsome), catalyzes the primary 3' uridylation of gRNA precursors to facilitate their recognition and to induce their processive 3'-5' degradation by DSS1, and the secondary 3' uridylation of mature gRNAs (PubMed:26833087). Involved in the 3' uridylylation of the long A/U tail of some edited and never-edited mRNAs (PubMed:20086102). Promotes 3' uridylylation-mediated decay of some never-edited mRNAs (PubMed:20086102). Does not mediate RNA-independent UTP polymerization (PubMed:27744351).</text>
</comment>
<comment type="catalytic activity">
    <reaction evidence="6 7 8 10 11 14">
        <text>RNA(n) + UTP = RNA(n)-3'-uridine ribonucleotide + diphosphate</text>
        <dbReference type="Rhea" id="RHEA:14785"/>
        <dbReference type="Rhea" id="RHEA-COMP:14527"/>
        <dbReference type="Rhea" id="RHEA-COMP:17348"/>
        <dbReference type="ChEBI" id="CHEBI:33019"/>
        <dbReference type="ChEBI" id="CHEBI:46398"/>
        <dbReference type="ChEBI" id="CHEBI:140395"/>
        <dbReference type="ChEBI" id="CHEBI:173116"/>
        <dbReference type="EC" id="2.7.7.52"/>
    </reaction>
</comment>
<comment type="cofactor">
    <cofactor evidence="7 15">
        <name>Mg(2+)</name>
        <dbReference type="ChEBI" id="CHEBI:18420"/>
    </cofactor>
    <cofactor evidence="3">
        <name>Mn(2+)</name>
        <dbReference type="ChEBI" id="CHEBI:29035"/>
    </cofactor>
    <text evidence="3 11">Binds 1 Mg(2+) or Mn(2+) per subunit (PubMed:27744351). The type of divalent cation used by the enzyme affects the nucleotide specificity; Mg(2+) induces predominantly uridine (U) incorporation while Mn(2+) also induces substantial incorporation of both adenine (A) and cytosine (C) (By similarity).</text>
</comment>
<comment type="biophysicochemical properties">
    <kinetics>
        <KM evidence="8">17 uM for UTP (with 6(U) single-stranded RNA as substrate)</KM>
        <KM evidence="8">1.5 uM for UTP (with double-stranded RNA as substrate)</KM>
        <KM evidence="11">8.5 uM for UTP (at 27 degrees Celsius)</KM>
        <KM evidence="11">0.53 uM for RNA (at 27 degrees Celsius)</KM>
        <text evidence="7 8 11">KM is 18-28 mM for UTP (at 27 degrees Celsius and 12 (U) single-stranded RNA as substrate) (PubMed:15304317). kcat is 100 min(-1) with UTP and 6(U) single-stranded RNA as substrates (PubMed:19465686). kcat is 0.0012 min(-1) with UTP and double-stranded RNA as substrates (PubMed:19465686). kcat is 15.5 min(-1) with UTP as substrate (PubMed:27744351). kcat is 23.5 min(-1) with RNA as substrate (PubMed:27744351).</text>
    </kinetics>
</comment>
<comment type="subunit">
    <text evidence="10 11">Oligomer (PubMed:27744351). Component of the mitochondrial 3' processome (MPsome) complex composed at least of terminal uridylyltransferase KRET1/TUT1, 3'-5' exonuclease DSS1, MPSS1, MPSS2 and MPSS3 (PubMed:26833087, PubMed:27744351). Within the complex, interacts with DSS1, MPSS1 and MPSS3 (PubMed:26833087).</text>
</comment>
<comment type="subcellular location">
    <subcellularLocation>
        <location evidence="8 10 11">Mitochondrion</location>
    </subcellularLocation>
</comment>
<comment type="developmental stage">
    <text evidence="10 11">Expressed at the procyclic stage (at protein level).</text>
</comment>
<comment type="domain">
    <text evidence="11">The C2H2-type zinc finger domain is required for the proper folding of the catalytic domain, but is dispensable for uridylation of single strand RNA substrate.</text>
</comment>
<comment type="disruption phenotype">
    <text evidence="6 9 10 11">RNAi-mediated knockdown at the procyclic stage causes severe growth defect and a severe reduction in mRNA editing (PubMed:11893335, PubMed:20086102, PubMed:26833087, PubMed:27744351). Reduced production of guided RNAs (gRNA) and rRNAs due to a block in the processing of gRNA and rRNA precursors (PubMed:20086102, PubMed:26833087). Accumulation of unprocessed precursors for some pre-edited and never-edited mRNAs (PubMed:20086102).</text>
</comment>
<comment type="similarity">
    <text evidence="13">Belongs to the DNA polymerase type-B-like family.</text>
</comment>
<reference evidence="16" key="1">
    <citation type="journal article" date="2002" name="Cell">
        <title>Trypanosome mitochondrial 3' terminal uridylyl transferase (TUTase): the key enzyme in U-insertion/deletion RNA editing.</title>
        <authorList>
            <person name="Aphasizhev R."/>
            <person name="Sbicego S."/>
            <person name="Peris M."/>
            <person name="Jang S.H."/>
            <person name="Aphasizheva I."/>
            <person name="Simpson A.M."/>
            <person name="Rivlin A."/>
            <person name="Simpson L."/>
        </authorList>
    </citation>
    <scope>NUCLEOTIDE SEQUENCE [GENOMIC DNA]</scope>
    <scope>FUNCTION</scope>
    <scope>CATALYTIC ACTIVITY</scope>
    <scope>DISRUPTION PHENOTYPE</scope>
</reference>
<reference key="2">
    <citation type="journal article" date="2002" name="Cell">
        <authorList>
            <person name="Aphasizhev R."/>
            <person name="Sbicego S."/>
            <person name="Peris M."/>
            <person name="Jang S.H."/>
            <person name="Aphasizheva I."/>
            <person name="Simpson A.M."/>
            <person name="Rivlin A."/>
            <person name="Simpson L."/>
        </authorList>
    </citation>
    <scope>ERRATUM OF PUBMED:11893335</scope>
</reference>
<reference evidence="13" key="3">
    <citation type="journal article" date="2004" name="FEBS Lett.">
        <title>Multiple terminal uridylyltransferases of trypanosomes.</title>
        <authorList>
            <person name="Aphasizhev R."/>
            <person name="Aphasizheva I."/>
            <person name="Simpson L."/>
        </authorList>
    </citation>
    <scope>CATALYTIC ACTIVITY</scope>
    <scope>COFACTOR</scope>
    <scope>BIOPHYSICOCHEMICAL PROPERTIES</scope>
</reference>
<reference evidence="13" key="4">
    <citation type="journal article" date="2009" name="RNA">
        <title>Novel TUTase associates with an editosome-like complex in mitochondria of Trypanosoma brucei.</title>
        <authorList>
            <person name="Aphasizheva I."/>
            <person name="Ringpis G.E."/>
            <person name="Weng J."/>
            <person name="Gershon P.D."/>
            <person name="Lathrop R.H."/>
            <person name="Aphasizhev R."/>
        </authorList>
    </citation>
    <scope>CATALYTIC ACTIVITY</scope>
    <scope>BIOPHYSICOCHEMICAL PROPERTIES</scope>
    <scope>SUBCELLULAR LOCATION</scope>
</reference>
<reference evidence="13" key="5">
    <citation type="journal article" date="2010" name="Mol. Cell. Biol.">
        <title>RET1-catalyzed uridylylation shapes the mitochondrial transcriptome in Trypanosoma brucei.</title>
        <authorList>
            <person name="Aphasizheva I."/>
            <person name="Aphasizhev R."/>
        </authorList>
    </citation>
    <scope>FUNCTION</scope>
    <scope>CATALYTIC ACTIVITY</scope>
    <scope>DISRUPTION PHENOTYPE</scope>
</reference>
<reference evidence="13" key="6">
    <citation type="journal article" date="2016" name="Mol. Cell">
        <title>Antisense Transcripts Delimit Exonucleolytic Activity of the Mitochondrial 3' Processome to Generate Guide RNAs.</title>
        <authorList>
            <person name="Suematsu T."/>
            <person name="Zhang L."/>
            <person name="Aphasizheva I."/>
            <person name="Monti S."/>
            <person name="Huang L."/>
            <person name="Wang Q."/>
            <person name="Costello C.E."/>
            <person name="Aphasizhev R."/>
        </authorList>
    </citation>
    <scope>FUNCTION</scope>
    <scope>CATALYTIC ACTIVITY</scope>
    <scope>IDENTIFICATION IN THE MPSOME COMPLEX</scope>
    <scope>INTERACTION WITH DSS1</scope>
    <scope>MPSS1 AND MPSS3</scope>
    <scope>SUBCELLULAR LOCATION</scope>
    <scope>DEVELOPMENTAL STAGE</scope>
    <scope>IDENTIFICATION BY MASS SPECTROMETRY</scope>
    <scope>DISRUPTION PHENOTYPE</scope>
</reference>
<reference evidence="17 18 19" key="7">
    <citation type="journal article" date="2016" name="Nucleic Acids Res.">
        <title>RNA Editing TUTase 1: structural foundation of substrate recognition, complex interactions and drug targeting.</title>
        <authorList>
            <person name="Rajappa-Titu L."/>
            <person name="Suematsu T."/>
            <person name="Munoz-Tello P."/>
            <person name="Long M."/>
            <person name="Demir O."/>
            <person name="Cheng K.J."/>
            <person name="Stagno J.R."/>
            <person name="Luecke H."/>
            <person name="Amaro R.E."/>
            <person name="Aphasizheva I."/>
            <person name="Aphasizhev R."/>
            <person name="Thore S."/>
        </authorList>
    </citation>
    <scope>X-RAY CRYSTALLOGRAPHY (1.60 ANGSTROMS) OF 189-699 AND MUTANT ALA-473 IN COMPLEX WITH ZINC; MAGNESIUM AND UTP</scope>
    <scope>FUNCTION</scope>
    <scope>CATALYTIC ACTIVITY</scope>
    <scope>COFACTOR</scope>
    <scope>BIOPHYSICOCHEMICAL PROPERTIES</scope>
    <scope>SUBUNIT</scope>
    <scope>IDENTIFICATION IN THE MPSOME COMPLEX</scope>
    <scope>SUBCELLULAR LOCATION</scope>
    <scope>DOMAIN</scope>
    <scope>MOTIF</scope>
    <scope>DEVELOPMENTAL STAGE</scope>
    <scope>DISRUPTION PHENOTYPE</scope>
</reference>
<protein>
    <recommendedName>
        <fullName evidence="13">Terminal uridylyltransferase 1</fullName>
        <shortName evidence="12">TUTase 1</shortName>
        <ecNumber evidence="6 7 8 10 11 14">2.7.7.52</ecNumber>
    </recommendedName>
    <alternativeName>
        <fullName evidence="12">3' terminal uridylyl transferase</fullName>
        <shortName evidence="12">3' TUTase</shortName>
    </alternativeName>
    <alternativeName>
        <fullName evidence="13">RNA editing 3' terminal uridylyltransferase 1</fullName>
        <shortName evidence="13">RET1</shortName>
        <shortName evidence="13">RNA editing TUTase 1</shortName>
    </alternativeName>
</protein>